<evidence type="ECO:0000255" key="1">
    <source>
        <dbReference type="HAMAP-Rule" id="MF_00487"/>
    </source>
</evidence>
<comment type="function">
    <text evidence="1">Catalyzes the reversible oxidation of malate to oxaloacetate.</text>
</comment>
<comment type="catalytic activity">
    <reaction evidence="1">
        <text>(S)-malate + NAD(+) = oxaloacetate + NADH + H(+)</text>
        <dbReference type="Rhea" id="RHEA:21432"/>
        <dbReference type="ChEBI" id="CHEBI:15378"/>
        <dbReference type="ChEBI" id="CHEBI:15589"/>
        <dbReference type="ChEBI" id="CHEBI:16452"/>
        <dbReference type="ChEBI" id="CHEBI:57540"/>
        <dbReference type="ChEBI" id="CHEBI:57945"/>
        <dbReference type="EC" id="1.1.1.37"/>
    </reaction>
</comment>
<comment type="similarity">
    <text evidence="1">Belongs to the LDH/MDH superfamily. MDH type 3 family.</text>
</comment>
<feature type="chain" id="PRO_1000026494" description="Malate dehydrogenase">
    <location>
        <begin position="1"/>
        <end position="320"/>
    </location>
</feature>
<feature type="active site" description="Proton acceptor" evidence="1">
    <location>
        <position position="176"/>
    </location>
</feature>
<feature type="binding site" evidence="1">
    <location>
        <begin position="10"/>
        <end position="15"/>
    </location>
    <ligand>
        <name>NAD(+)</name>
        <dbReference type="ChEBI" id="CHEBI:57540"/>
    </ligand>
</feature>
<feature type="binding site" evidence="1">
    <location>
        <position position="34"/>
    </location>
    <ligand>
        <name>NAD(+)</name>
        <dbReference type="ChEBI" id="CHEBI:57540"/>
    </ligand>
</feature>
<feature type="binding site" evidence="1">
    <location>
        <position position="83"/>
    </location>
    <ligand>
        <name>substrate</name>
    </ligand>
</feature>
<feature type="binding site" evidence="1">
    <location>
        <position position="89"/>
    </location>
    <ligand>
        <name>substrate</name>
    </ligand>
</feature>
<feature type="binding site" evidence="1">
    <location>
        <position position="96"/>
    </location>
    <ligand>
        <name>NAD(+)</name>
        <dbReference type="ChEBI" id="CHEBI:57540"/>
    </ligand>
</feature>
<feature type="binding site" evidence="1">
    <location>
        <begin position="119"/>
        <end position="121"/>
    </location>
    <ligand>
        <name>NAD(+)</name>
        <dbReference type="ChEBI" id="CHEBI:57540"/>
    </ligand>
</feature>
<feature type="binding site" evidence="1">
    <location>
        <position position="121"/>
    </location>
    <ligand>
        <name>substrate</name>
    </ligand>
</feature>
<feature type="binding site" evidence="1">
    <location>
        <position position="152"/>
    </location>
    <ligand>
        <name>substrate</name>
    </ligand>
</feature>
<accession>Q1GQY3</accession>
<proteinExistence type="inferred from homology"/>
<sequence length="320" mass="33008">MGRKKIALIGAGNIGGTLALLAAQKELGDVVLFDVVEGVPQGKALDLSQVGPIAGFDAKISGSNDYADIAGADVIIVTAGVARKPGMSRDDLLGINLKVMKAVGEGIKANAPDAFVICITNPLDAMVWALREFSGLPHSKVVGMAGVLDSARFSHFIADEFDVSVKDVNTFVLGGHGDTMVPVVRYSTVNGIPVPDLVKMGLSSQDKIDAIVKRTRGGGGEIVALLGTGSAFYAPAASGIAMAEAYLGDQKRILPCAAYVDGQYGVDGLYVGVPVMIGAGGVEKIVEIELDDADKAGLQVSVDAVKELLEACKKLDPSLA</sequence>
<protein>
    <recommendedName>
        <fullName evidence="1">Malate dehydrogenase</fullName>
        <ecNumber evidence="1">1.1.1.37</ecNumber>
    </recommendedName>
</protein>
<dbReference type="EC" id="1.1.1.37" evidence="1"/>
<dbReference type="EMBL" id="CP000356">
    <property type="protein sequence ID" value="ABF53939.1"/>
    <property type="molecule type" value="Genomic_DNA"/>
</dbReference>
<dbReference type="RefSeq" id="WP_011542515.1">
    <property type="nucleotide sequence ID" value="NC_008048.1"/>
</dbReference>
<dbReference type="SMR" id="Q1GQY3"/>
<dbReference type="STRING" id="317655.Sala_2230"/>
<dbReference type="KEGG" id="sal:Sala_2230"/>
<dbReference type="eggNOG" id="COG0039">
    <property type="taxonomic scope" value="Bacteria"/>
</dbReference>
<dbReference type="HOGENOM" id="CLU_045401_2_1_5"/>
<dbReference type="OrthoDB" id="9802969at2"/>
<dbReference type="Proteomes" id="UP000006578">
    <property type="component" value="Chromosome"/>
</dbReference>
<dbReference type="GO" id="GO:0004459">
    <property type="term" value="F:L-lactate dehydrogenase activity"/>
    <property type="evidence" value="ECO:0007669"/>
    <property type="project" value="TreeGrafter"/>
</dbReference>
<dbReference type="GO" id="GO:0030060">
    <property type="term" value="F:L-malate dehydrogenase (NAD+) activity"/>
    <property type="evidence" value="ECO:0007669"/>
    <property type="project" value="UniProtKB-UniRule"/>
</dbReference>
<dbReference type="GO" id="GO:0006089">
    <property type="term" value="P:lactate metabolic process"/>
    <property type="evidence" value="ECO:0007669"/>
    <property type="project" value="TreeGrafter"/>
</dbReference>
<dbReference type="GO" id="GO:0006099">
    <property type="term" value="P:tricarboxylic acid cycle"/>
    <property type="evidence" value="ECO:0007669"/>
    <property type="project" value="UniProtKB-UniRule"/>
</dbReference>
<dbReference type="CDD" id="cd01339">
    <property type="entry name" value="LDH-like_MDH"/>
    <property type="match status" value="1"/>
</dbReference>
<dbReference type="FunFam" id="3.40.50.720:FF:000018">
    <property type="entry name" value="Malate dehydrogenase"/>
    <property type="match status" value="1"/>
</dbReference>
<dbReference type="FunFam" id="3.90.110.10:FF:000004">
    <property type="entry name" value="Malate dehydrogenase"/>
    <property type="match status" value="1"/>
</dbReference>
<dbReference type="Gene3D" id="3.90.110.10">
    <property type="entry name" value="Lactate dehydrogenase/glycoside hydrolase, family 4, C-terminal"/>
    <property type="match status" value="1"/>
</dbReference>
<dbReference type="Gene3D" id="3.40.50.720">
    <property type="entry name" value="NAD(P)-binding Rossmann-like Domain"/>
    <property type="match status" value="1"/>
</dbReference>
<dbReference type="HAMAP" id="MF_00487">
    <property type="entry name" value="Malate_dehydrog_3"/>
    <property type="match status" value="1"/>
</dbReference>
<dbReference type="InterPro" id="IPR001557">
    <property type="entry name" value="L-lactate/malate_DH"/>
</dbReference>
<dbReference type="InterPro" id="IPR022383">
    <property type="entry name" value="Lactate/malate_DH_C"/>
</dbReference>
<dbReference type="InterPro" id="IPR001236">
    <property type="entry name" value="Lactate/malate_DH_N"/>
</dbReference>
<dbReference type="InterPro" id="IPR015955">
    <property type="entry name" value="Lactate_DH/Glyco_Ohase_4_C"/>
</dbReference>
<dbReference type="InterPro" id="IPR011275">
    <property type="entry name" value="Malate_DH_type3"/>
</dbReference>
<dbReference type="InterPro" id="IPR036291">
    <property type="entry name" value="NAD(P)-bd_dom_sf"/>
</dbReference>
<dbReference type="NCBIfam" id="TIGR01763">
    <property type="entry name" value="MalateDH_bact"/>
    <property type="match status" value="1"/>
</dbReference>
<dbReference type="NCBIfam" id="NF004863">
    <property type="entry name" value="PRK06223.1"/>
    <property type="match status" value="1"/>
</dbReference>
<dbReference type="PANTHER" id="PTHR43128">
    <property type="entry name" value="L-2-HYDROXYCARBOXYLATE DEHYDROGENASE (NAD(P)(+))"/>
    <property type="match status" value="1"/>
</dbReference>
<dbReference type="PANTHER" id="PTHR43128:SF16">
    <property type="entry name" value="L-LACTATE DEHYDROGENASE"/>
    <property type="match status" value="1"/>
</dbReference>
<dbReference type="Pfam" id="PF02866">
    <property type="entry name" value="Ldh_1_C"/>
    <property type="match status" value="1"/>
</dbReference>
<dbReference type="Pfam" id="PF00056">
    <property type="entry name" value="Ldh_1_N"/>
    <property type="match status" value="1"/>
</dbReference>
<dbReference type="PIRSF" id="PIRSF000102">
    <property type="entry name" value="Lac_mal_DH"/>
    <property type="match status" value="1"/>
</dbReference>
<dbReference type="PRINTS" id="PR00086">
    <property type="entry name" value="LLDHDRGNASE"/>
</dbReference>
<dbReference type="SUPFAM" id="SSF56327">
    <property type="entry name" value="LDH C-terminal domain-like"/>
    <property type="match status" value="1"/>
</dbReference>
<dbReference type="SUPFAM" id="SSF51735">
    <property type="entry name" value="NAD(P)-binding Rossmann-fold domains"/>
    <property type="match status" value="1"/>
</dbReference>
<keyword id="KW-0520">NAD</keyword>
<keyword id="KW-0560">Oxidoreductase</keyword>
<keyword id="KW-1185">Reference proteome</keyword>
<keyword id="KW-0816">Tricarboxylic acid cycle</keyword>
<organism>
    <name type="scientific">Sphingopyxis alaskensis (strain DSM 13593 / LMG 18877 / RB2256)</name>
    <name type="common">Sphingomonas alaskensis</name>
    <dbReference type="NCBI Taxonomy" id="317655"/>
    <lineage>
        <taxon>Bacteria</taxon>
        <taxon>Pseudomonadati</taxon>
        <taxon>Pseudomonadota</taxon>
        <taxon>Alphaproteobacteria</taxon>
        <taxon>Sphingomonadales</taxon>
        <taxon>Sphingomonadaceae</taxon>
        <taxon>Sphingopyxis</taxon>
    </lineage>
</organism>
<gene>
    <name evidence="1" type="primary">mdh</name>
    <name type="ordered locus">Sala_2230</name>
</gene>
<name>MDH_SPHAL</name>
<reference key="1">
    <citation type="journal article" date="2009" name="Proc. Natl. Acad. Sci. U.S.A.">
        <title>The genomic basis of trophic strategy in marine bacteria.</title>
        <authorList>
            <person name="Lauro F.M."/>
            <person name="McDougald D."/>
            <person name="Thomas T."/>
            <person name="Williams T.J."/>
            <person name="Egan S."/>
            <person name="Rice S."/>
            <person name="DeMaere M.Z."/>
            <person name="Ting L."/>
            <person name="Ertan H."/>
            <person name="Johnson J."/>
            <person name="Ferriera S."/>
            <person name="Lapidus A."/>
            <person name="Anderson I."/>
            <person name="Kyrpides N."/>
            <person name="Munk A.C."/>
            <person name="Detter C."/>
            <person name="Han C.S."/>
            <person name="Brown M.V."/>
            <person name="Robb F.T."/>
            <person name="Kjelleberg S."/>
            <person name="Cavicchioli R."/>
        </authorList>
    </citation>
    <scope>NUCLEOTIDE SEQUENCE [LARGE SCALE GENOMIC DNA]</scope>
    <source>
        <strain>DSM 13593 / LMG 18877 / RB2256</strain>
    </source>
</reference>